<accession>Q9JLQ2</accession>
<accession>E9QPU7</accession>
<reference key="1">
    <citation type="journal article" date="1999" name="J. Biol. Chem.">
        <title>A tyrosine-phosphorylated protein that binds to an important regulatory region on the cool family of p21-activated kinase-binding proteins.</title>
        <authorList>
            <person name="Bagrodia S."/>
            <person name="Bailey D."/>
            <person name="Lenard Z."/>
            <person name="Hart M."/>
            <person name="Guan J.L."/>
            <person name="Premont R.T."/>
            <person name="Taylor S.J."/>
            <person name="Cerione R.A."/>
        </authorList>
    </citation>
    <scope>NUCLEOTIDE SEQUENCE [MRNA]</scope>
</reference>
<reference key="2">
    <citation type="journal article" date="2009" name="PLoS Biol.">
        <title>Lineage-specific biology revealed by a finished genome assembly of the mouse.</title>
        <authorList>
            <person name="Church D.M."/>
            <person name="Goodstadt L."/>
            <person name="Hillier L.W."/>
            <person name="Zody M.C."/>
            <person name="Goldstein S."/>
            <person name="She X."/>
            <person name="Bult C.J."/>
            <person name="Agarwala R."/>
            <person name="Cherry J.L."/>
            <person name="DiCuccio M."/>
            <person name="Hlavina W."/>
            <person name="Kapustin Y."/>
            <person name="Meric P."/>
            <person name="Maglott D."/>
            <person name="Birtle Z."/>
            <person name="Marques A.C."/>
            <person name="Graves T."/>
            <person name="Zhou S."/>
            <person name="Teague B."/>
            <person name="Potamousis K."/>
            <person name="Churas C."/>
            <person name="Place M."/>
            <person name="Herschleb J."/>
            <person name="Runnheim R."/>
            <person name="Forrest D."/>
            <person name="Amos-Landgraf J."/>
            <person name="Schwartz D.C."/>
            <person name="Cheng Z."/>
            <person name="Lindblad-Toh K."/>
            <person name="Eichler E.E."/>
            <person name="Ponting C.P."/>
        </authorList>
    </citation>
    <scope>NUCLEOTIDE SEQUENCE [LARGE SCALE GENOMIC DNA]</scope>
    <source>
        <strain>C57BL/6J</strain>
    </source>
</reference>
<reference key="3">
    <citation type="journal article" date="1999" name="J. Cell Biol.">
        <title>Paxillin LD4 motif binds PAK and PIX through a novel 95-kD ankyrin repeat, ARF-GAP protein: a role in cytoskeletal remodeling.</title>
        <authorList>
            <person name="Turner C.E."/>
            <person name="Brown M.C."/>
            <person name="Perrotta J.A."/>
            <person name="Riedy M.C."/>
            <person name="Nikolopoulos S.N."/>
            <person name="McDonald A.R."/>
            <person name="Bagrodia S."/>
            <person name="Thomas S.M."/>
            <person name="Leventhal P.S."/>
        </authorList>
    </citation>
    <scope>INTERACTION WITH TGFB1I1</scope>
</reference>
<reference key="4">
    <citation type="journal article" date="2007" name="Nat. Neurosci.">
        <title>Grb4 and GIT1 transduce ephrinB reverse signals modulating spine morphogenesis and synapse formation.</title>
        <authorList>
            <person name="Segura I."/>
            <person name="Essmann C.L."/>
            <person name="Weinges S."/>
            <person name="Acker-Palmer A."/>
        </authorList>
    </citation>
    <scope>INTERACTION WITH EFNB1 AND NCK2</scope>
    <scope>TISSUE SPECIFICITY</scope>
</reference>
<reference key="5">
    <citation type="journal article" date="2007" name="Proc. Natl. Acad. Sci. U.S.A.">
        <title>Large-scale phosphorylation analysis of mouse liver.</title>
        <authorList>
            <person name="Villen J."/>
            <person name="Beausoleil S.A."/>
            <person name="Gerber S.A."/>
            <person name="Gygi S.P."/>
        </authorList>
    </citation>
    <scope>PHOSPHORYLATION [LARGE SCALE ANALYSIS] AT SER-396 AND THR-400</scope>
    <scope>IDENTIFICATION BY MASS SPECTROMETRY [LARGE SCALE ANALYSIS]</scope>
    <source>
        <tissue>Liver</tissue>
    </source>
</reference>
<reference key="6">
    <citation type="journal article" date="2010" name="Cell">
        <title>A tissue-specific atlas of mouse protein phosphorylation and expression.</title>
        <authorList>
            <person name="Huttlin E.L."/>
            <person name="Jedrychowski M.P."/>
            <person name="Elias J.E."/>
            <person name="Goswami T."/>
            <person name="Rad R."/>
            <person name="Beausoleil S.A."/>
            <person name="Villen J."/>
            <person name="Haas W."/>
            <person name="Sowa M.E."/>
            <person name="Gygi S.P."/>
        </authorList>
    </citation>
    <scope>PHOSPHORYLATION [LARGE SCALE ANALYSIS] AT SER-393; SER-396; SER-511; SER-519; THR-536 AND SER-563</scope>
    <scope>IDENTIFICATION BY MASS SPECTROMETRY [LARGE SCALE ANALYSIS]</scope>
    <source>
        <tissue>Brain</tissue>
        <tissue>Brown adipose tissue</tissue>
        <tissue>Heart</tissue>
        <tissue>Kidney</tissue>
        <tissue>Liver</tissue>
        <tissue>Lung</tissue>
        <tissue>Spleen</tissue>
        <tissue>Testis</tissue>
    </source>
</reference>
<comment type="function">
    <text evidence="1">GTPase-activating protein for ADP ribosylation factor family members, including ARF1.</text>
</comment>
<comment type="subunit">
    <text evidence="1 2 5 6">May form heterooligomers with GIT1 (By similarity). Directly interacts with protein Piccolo/PCLO (By similarity). Interacts with PPFIA1 and PPFIA2 (By similarity). Interacts with ARHGEF7 (By similarity). Identified in a complex with ARHGEF6 and BIN2 (By similarity). Interacts with PAK3 (By similarity). Interacts with PXN/paxillin (By similarity). Interacts with TGFB1I1 (PubMed:10330411). Forms a complex with EFNB1 and GRB4/NCK2 (PubMed:17310244).</text>
</comment>
<comment type="interaction">
    <interactant intactId="EBI-642860">
        <id>Q9JLQ2</id>
    </interactant>
    <interactant intactId="EBI-642580">
        <id>Q9ES28</id>
        <label>Arhgef7</label>
    </interactant>
    <organismsDiffer>false</organismsDiffer>
    <experiments>6</experiments>
</comment>
<comment type="tissue specificity">
    <text evidence="6">Expressed in the brain (at protein level).</text>
</comment>
<comment type="PTM">
    <text>Tyrosine phosphorylated when coexpressed in cells with PTK2/FAK1 and SRC.</text>
</comment>
<organism>
    <name type="scientific">Mus musculus</name>
    <name type="common">Mouse</name>
    <dbReference type="NCBI Taxonomy" id="10090"/>
    <lineage>
        <taxon>Eukaryota</taxon>
        <taxon>Metazoa</taxon>
        <taxon>Chordata</taxon>
        <taxon>Craniata</taxon>
        <taxon>Vertebrata</taxon>
        <taxon>Euteleostomi</taxon>
        <taxon>Mammalia</taxon>
        <taxon>Eutheria</taxon>
        <taxon>Euarchontoglires</taxon>
        <taxon>Glires</taxon>
        <taxon>Rodentia</taxon>
        <taxon>Myomorpha</taxon>
        <taxon>Muroidea</taxon>
        <taxon>Muridae</taxon>
        <taxon>Murinae</taxon>
        <taxon>Mus</taxon>
        <taxon>Mus</taxon>
    </lineage>
</organism>
<sequence length="708" mass="78766">MSKRLRSSDVCADCNGPDPSWASVNRGTFICDECCSVHRSLGRHISQVRHLKHTAWPPTLLQMVETLYNNGANSIWEHSLLDPASIMSGRRKANPQDKVHPNKAEFIRAKYQMLAFVHRLPCREDDSVTAKDLSKQLHSSVRTGNLETCLRLLSLGAQANFFHPEKGSTPLHVASKAGQILQAELLAVYGADPGTQDSSGKTPVDYARQGGHHELAERLIEIQYELTDRLAFYLCGRKPDHKSGQHFLIPQRADSLDLSELAKAAKKKLQSLSNHLFEELAMDVYDEVDRRETDAVWLATQNHSTLVTETTVVPFLPVNPEYSSTRNQGRQKLARFNAHEFATLVIDILSDAKRRQQGSPLSRSKDNVELILRTVSTQHSTESQDNDQPDYDSVASDEDTDVETRASKANRQKLQTLQSENSSLRRQATASACQVQTGSDHKDTASHSSLKRRPSARGSRPMSMYETGSGQKPYLPMGEASHPEESRTRLQPFPTHIGRSALVTSSSSLPSFPSTLSWSRDESARRASRLEKQNSTPESDYDNTACDPEPDDTGSTRKGRQRSMLWQGDGLLPDTAEPHSVPSPTLPSTEDVIRKTEQITKNIQELLRAAQENKHDSYIPCSERIHVAVTEMAALFPKKPKSDTVRTSLRLLTSSAYRLQSECRKALPGDSSLPTDVQLVTQQVIQCAYDIAKAAKQLVTITTKENSS</sequence>
<evidence type="ECO:0000250" key="1">
    <source>
        <dbReference type="UniProtKB" id="Q14161"/>
    </source>
</evidence>
<evidence type="ECO:0000250" key="2">
    <source>
        <dbReference type="UniProtKB" id="Q66H91"/>
    </source>
</evidence>
<evidence type="ECO:0000255" key="3">
    <source>
        <dbReference type="PROSITE-ProRule" id="PRU00288"/>
    </source>
</evidence>
<evidence type="ECO:0000256" key="4">
    <source>
        <dbReference type="SAM" id="MobiDB-lite"/>
    </source>
</evidence>
<evidence type="ECO:0000269" key="5">
    <source>
    </source>
</evidence>
<evidence type="ECO:0000269" key="6">
    <source>
    </source>
</evidence>
<evidence type="ECO:0000305" key="7"/>
<evidence type="ECO:0007744" key="8">
    <source>
    </source>
</evidence>
<evidence type="ECO:0007744" key="9">
    <source>
    </source>
</evidence>
<evidence type="ECO:0007829" key="10">
    <source>
        <dbReference type="PDB" id="6JMT"/>
    </source>
</evidence>
<feature type="chain" id="PRO_0000074204" description="ARF GTPase-activating protein GIT2">
    <location>
        <begin position="1"/>
        <end position="708"/>
    </location>
</feature>
<feature type="domain" description="Arf-GAP" evidence="3">
    <location>
        <begin position="1"/>
        <end position="124"/>
    </location>
</feature>
<feature type="repeat" description="ANK 1">
    <location>
        <begin position="132"/>
        <end position="161"/>
    </location>
</feature>
<feature type="repeat" description="ANK 2">
    <location>
        <begin position="166"/>
        <end position="195"/>
    </location>
</feature>
<feature type="repeat" description="ANK 3">
    <location>
        <begin position="199"/>
        <end position="228"/>
    </location>
</feature>
<feature type="zinc finger region" description="C4-type" evidence="3">
    <location>
        <begin position="11"/>
        <end position="34"/>
    </location>
</feature>
<feature type="region of interest" description="Disordered" evidence="4">
    <location>
        <begin position="376"/>
        <end position="592"/>
    </location>
</feature>
<feature type="compositionally biased region" description="Acidic residues" evidence="4">
    <location>
        <begin position="384"/>
        <end position="401"/>
    </location>
</feature>
<feature type="compositionally biased region" description="Polar residues" evidence="4">
    <location>
        <begin position="407"/>
        <end position="438"/>
    </location>
</feature>
<feature type="compositionally biased region" description="Low complexity" evidence="4">
    <location>
        <begin position="504"/>
        <end position="518"/>
    </location>
</feature>
<feature type="compositionally biased region" description="Basic and acidic residues" evidence="4">
    <location>
        <begin position="519"/>
        <end position="532"/>
    </location>
</feature>
<feature type="modified residue" description="Phosphoserine" evidence="9">
    <location>
        <position position="393"/>
    </location>
</feature>
<feature type="modified residue" description="Phosphoserine" evidence="8 9">
    <location>
        <position position="396"/>
    </location>
</feature>
<feature type="modified residue" description="Phosphothreonine" evidence="8">
    <location>
        <position position="400"/>
    </location>
</feature>
<feature type="modified residue" description="Phosphoserine" evidence="1">
    <location>
        <position position="508"/>
    </location>
</feature>
<feature type="modified residue" description="Phosphoserine" evidence="9">
    <location>
        <position position="511"/>
    </location>
</feature>
<feature type="modified residue" description="Phosphoserine" evidence="9">
    <location>
        <position position="519"/>
    </location>
</feature>
<feature type="modified residue" description="Phosphothreonine" evidence="9">
    <location>
        <position position="536"/>
    </location>
</feature>
<feature type="modified residue" description="Phosphoserine" evidence="9">
    <location>
        <position position="563"/>
    </location>
</feature>
<feature type="sequence conflict" description="In Ref. 1; AAF61633." evidence="7" ref="1">
    <original>V</original>
    <variation>E</variation>
    <location>
        <position position="188"/>
    </location>
</feature>
<feature type="helix" evidence="10">
    <location>
        <begin position="7"/>
        <end position="9"/>
    </location>
</feature>
<feature type="turn" evidence="10">
    <location>
        <begin position="12"/>
        <end position="14"/>
    </location>
</feature>
<feature type="strand" evidence="10">
    <location>
        <begin position="21"/>
        <end position="23"/>
    </location>
</feature>
<feature type="turn" evidence="10">
    <location>
        <begin position="24"/>
        <end position="27"/>
    </location>
</feature>
<feature type="strand" evidence="10">
    <location>
        <begin position="28"/>
        <end position="30"/>
    </location>
</feature>
<feature type="helix" evidence="10">
    <location>
        <begin position="32"/>
        <end position="41"/>
    </location>
</feature>
<feature type="turn" evidence="10">
    <location>
        <begin position="43"/>
        <end position="45"/>
    </location>
</feature>
<feature type="strand" evidence="10">
    <location>
        <begin position="48"/>
        <end position="54"/>
    </location>
</feature>
<feature type="helix" evidence="10">
    <location>
        <begin position="58"/>
        <end position="68"/>
    </location>
</feature>
<feature type="turn" evidence="10">
    <location>
        <begin position="69"/>
        <end position="71"/>
    </location>
</feature>
<feature type="helix" evidence="10">
    <location>
        <begin position="72"/>
        <end position="76"/>
    </location>
</feature>
<feature type="turn" evidence="10">
    <location>
        <begin position="77"/>
        <end position="80"/>
    </location>
</feature>
<feature type="strand" evidence="10">
    <location>
        <begin position="88"/>
        <end position="90"/>
    </location>
</feature>
<feature type="turn" evidence="10">
    <location>
        <begin position="99"/>
        <end position="101"/>
    </location>
</feature>
<feature type="helix" evidence="10">
    <location>
        <begin position="102"/>
        <end position="111"/>
    </location>
</feature>
<feature type="helix" evidence="10">
    <location>
        <begin position="127"/>
        <end position="140"/>
    </location>
</feature>
<feature type="helix" evidence="10">
    <location>
        <begin position="146"/>
        <end position="155"/>
    </location>
</feature>
<feature type="turn" evidence="10">
    <location>
        <begin position="164"/>
        <end position="166"/>
    </location>
</feature>
<feature type="helix" evidence="10">
    <location>
        <begin position="170"/>
        <end position="176"/>
    </location>
</feature>
<feature type="helix" evidence="10">
    <location>
        <begin position="180"/>
        <end position="188"/>
    </location>
</feature>
<feature type="helix" evidence="10">
    <location>
        <begin position="203"/>
        <end position="209"/>
    </location>
</feature>
<feature type="helix" evidence="10">
    <location>
        <begin position="213"/>
        <end position="223"/>
    </location>
</feature>
<feature type="helix" evidence="10">
    <location>
        <begin position="225"/>
        <end position="235"/>
    </location>
</feature>
<feature type="helix" evidence="10">
    <location>
        <begin position="241"/>
        <end position="243"/>
    </location>
</feature>
<feature type="turn" evidence="10">
    <location>
        <begin position="253"/>
        <end position="255"/>
    </location>
</feature>
<feature type="helix" evidence="10">
    <location>
        <begin position="260"/>
        <end position="270"/>
    </location>
</feature>
<feature type="helix" evidence="10">
    <location>
        <begin position="274"/>
        <end position="300"/>
    </location>
</feature>
<feature type="helix" evidence="10">
    <location>
        <begin position="303"/>
        <end position="307"/>
    </location>
</feature>
<feature type="helix" evidence="10">
    <location>
        <begin position="324"/>
        <end position="332"/>
    </location>
</feature>
<feature type="helix" evidence="10">
    <location>
        <begin position="333"/>
        <end position="335"/>
    </location>
</feature>
<feature type="helix" evidence="10">
    <location>
        <begin position="338"/>
        <end position="356"/>
    </location>
</feature>
<protein>
    <recommendedName>
        <fullName>ARF GTPase-activating protein GIT2</fullName>
        <shortName>ARF GAP GIT2</shortName>
    </recommendedName>
    <alternativeName>
        <fullName>Cool-interacting tyrosine-phosphorylated protein 2</fullName>
        <shortName>CAT-2</shortName>
        <shortName>CAT2</shortName>
    </alternativeName>
    <alternativeName>
        <fullName>G protein-coupled receptor kinase-interactor 2</fullName>
    </alternativeName>
    <alternativeName>
        <fullName>GRK-interacting protein 2</fullName>
    </alternativeName>
</protein>
<name>GIT2_MOUSE</name>
<keyword id="KW-0002">3D-structure</keyword>
<keyword id="KW-0040">ANK repeat</keyword>
<keyword id="KW-0343">GTPase activation</keyword>
<keyword id="KW-0479">Metal-binding</keyword>
<keyword id="KW-0597">Phosphoprotein</keyword>
<keyword id="KW-1185">Reference proteome</keyword>
<keyword id="KW-0677">Repeat</keyword>
<keyword id="KW-0862">Zinc</keyword>
<keyword id="KW-0863">Zinc-finger</keyword>
<gene>
    <name type="primary">Git2</name>
</gene>
<proteinExistence type="evidence at protein level"/>
<dbReference type="EMBL" id="AF148693">
    <property type="protein sequence ID" value="AAF61633.1"/>
    <property type="molecule type" value="mRNA"/>
</dbReference>
<dbReference type="EMBL" id="AC087330">
    <property type="status" value="NOT_ANNOTATED_CDS"/>
    <property type="molecule type" value="Genomic_DNA"/>
</dbReference>
<dbReference type="CCDS" id="CCDS19570.2"/>
<dbReference type="RefSeq" id="NP_062808.3">
    <property type="nucleotide sequence ID" value="NM_019834.3"/>
</dbReference>
<dbReference type="PDB" id="6JMT">
    <property type="method" value="X-ray"/>
    <property type="resolution" value="2.80 A"/>
    <property type="chains" value="A/B/C/D/E/F=1-359"/>
</dbReference>
<dbReference type="PDBsum" id="6JMT"/>
<dbReference type="SMR" id="Q9JLQ2"/>
<dbReference type="BioGRID" id="204983">
    <property type="interactions" value="5"/>
</dbReference>
<dbReference type="FunCoup" id="Q9JLQ2">
    <property type="interactions" value="2971"/>
</dbReference>
<dbReference type="IntAct" id="Q9JLQ2">
    <property type="interactions" value="4"/>
</dbReference>
<dbReference type="MINT" id="Q9JLQ2"/>
<dbReference type="STRING" id="10090.ENSMUSP00000083754"/>
<dbReference type="GlyGen" id="Q9JLQ2">
    <property type="glycosylation" value="3 sites, 1 O-linked glycan (3 sites)"/>
</dbReference>
<dbReference type="iPTMnet" id="Q9JLQ2"/>
<dbReference type="PhosphoSitePlus" id="Q9JLQ2"/>
<dbReference type="jPOST" id="Q9JLQ2"/>
<dbReference type="PaxDb" id="10090-ENSMUSP00000107803"/>
<dbReference type="PeptideAtlas" id="Q9JLQ2"/>
<dbReference type="ProteomicsDB" id="265750"/>
<dbReference type="Pumba" id="Q9JLQ2"/>
<dbReference type="ABCD" id="Q9JLQ2">
    <property type="antibodies" value="1 sequenced antibody"/>
</dbReference>
<dbReference type="Antibodypedia" id="30932">
    <property type="antibodies" value="325 antibodies from 37 providers"/>
</dbReference>
<dbReference type="DNASU" id="26431"/>
<dbReference type="Ensembl" id="ENSMUST00000112185.9">
    <property type="protein sequence ID" value="ENSMUSP00000107803.3"/>
    <property type="gene ID" value="ENSMUSG00000041890.18"/>
</dbReference>
<dbReference type="GeneID" id="26431"/>
<dbReference type="KEGG" id="mmu:26431"/>
<dbReference type="UCSC" id="uc008yzz.1">
    <property type="organism name" value="mouse"/>
</dbReference>
<dbReference type="AGR" id="MGI:1347053"/>
<dbReference type="CTD" id="9815"/>
<dbReference type="MGI" id="MGI:1347053">
    <property type="gene designation" value="Git2"/>
</dbReference>
<dbReference type="VEuPathDB" id="HostDB:ENSMUSG00000041890"/>
<dbReference type="eggNOG" id="KOG0818">
    <property type="taxonomic scope" value="Eukaryota"/>
</dbReference>
<dbReference type="GeneTree" id="ENSGT00940000156383"/>
<dbReference type="InParanoid" id="Q9JLQ2"/>
<dbReference type="OrthoDB" id="5588096at2759"/>
<dbReference type="TreeFam" id="TF317762"/>
<dbReference type="Reactome" id="R-MMU-9013149">
    <property type="pathway name" value="RAC1 GTPase cycle"/>
</dbReference>
<dbReference type="Reactome" id="R-MMU-9013404">
    <property type="pathway name" value="RAC2 GTPase cycle"/>
</dbReference>
<dbReference type="Reactome" id="R-MMU-9013406">
    <property type="pathway name" value="RHOQ GTPase cycle"/>
</dbReference>
<dbReference type="Reactome" id="R-MMU-9013420">
    <property type="pathway name" value="RHOU GTPase cycle"/>
</dbReference>
<dbReference type="Reactome" id="R-MMU-9013423">
    <property type="pathway name" value="RAC3 GTPase cycle"/>
</dbReference>
<dbReference type="Reactome" id="R-MMU-9013424">
    <property type="pathway name" value="RHOV GTPase cycle"/>
</dbReference>
<dbReference type="BioGRID-ORCS" id="26431">
    <property type="hits" value="4 hits in 63 CRISPR screens"/>
</dbReference>
<dbReference type="ChiTaRS" id="Git2">
    <property type="organism name" value="mouse"/>
</dbReference>
<dbReference type="PRO" id="PR:Q9JLQ2"/>
<dbReference type="Proteomes" id="UP000000589">
    <property type="component" value="Chromosome 5"/>
</dbReference>
<dbReference type="RNAct" id="Q9JLQ2">
    <property type="molecule type" value="protein"/>
</dbReference>
<dbReference type="Bgee" id="ENSMUSG00000041890">
    <property type="expression patterns" value="Expressed in placenta labyrinth and 256 other cell types or tissues"/>
</dbReference>
<dbReference type="ExpressionAtlas" id="Q9JLQ2">
    <property type="expression patterns" value="baseline and differential"/>
</dbReference>
<dbReference type="GO" id="GO:0044305">
    <property type="term" value="C:calyx of Held"/>
    <property type="evidence" value="ECO:0000314"/>
    <property type="project" value="SynGO"/>
</dbReference>
<dbReference type="GO" id="GO:0098793">
    <property type="term" value="C:presynapse"/>
    <property type="evidence" value="ECO:0000314"/>
    <property type="project" value="SynGO"/>
</dbReference>
<dbReference type="GO" id="GO:0005096">
    <property type="term" value="F:GTPase activator activity"/>
    <property type="evidence" value="ECO:0007669"/>
    <property type="project" value="UniProtKB-KW"/>
</dbReference>
<dbReference type="GO" id="GO:0044877">
    <property type="term" value="F:protein-containing complex binding"/>
    <property type="evidence" value="ECO:0000353"/>
    <property type="project" value="MGI"/>
</dbReference>
<dbReference type="GO" id="GO:0008270">
    <property type="term" value="F:zinc ion binding"/>
    <property type="evidence" value="ECO:0007669"/>
    <property type="project" value="UniProtKB-KW"/>
</dbReference>
<dbReference type="GO" id="GO:0048266">
    <property type="term" value="P:behavioral response to pain"/>
    <property type="evidence" value="ECO:0000315"/>
    <property type="project" value="MGI"/>
</dbReference>
<dbReference type="GO" id="GO:0007420">
    <property type="term" value="P:brain development"/>
    <property type="evidence" value="ECO:0007669"/>
    <property type="project" value="InterPro"/>
</dbReference>
<dbReference type="GO" id="GO:0099171">
    <property type="term" value="P:presynaptic modulation of chemical synaptic transmission"/>
    <property type="evidence" value="ECO:0000314"/>
    <property type="project" value="SynGO"/>
</dbReference>
<dbReference type="GO" id="GO:0032012">
    <property type="term" value="P:regulation of ARF protein signal transduction"/>
    <property type="evidence" value="ECO:0007669"/>
    <property type="project" value="InterPro"/>
</dbReference>
<dbReference type="GO" id="GO:2000300">
    <property type="term" value="P:regulation of synaptic vesicle exocytosis"/>
    <property type="evidence" value="ECO:0000314"/>
    <property type="project" value="SynGO"/>
</dbReference>
<dbReference type="CDD" id="cd08847">
    <property type="entry name" value="ArfGap_GIT2"/>
    <property type="match status" value="1"/>
</dbReference>
<dbReference type="FunFam" id="1.25.40.20:FF:000013">
    <property type="entry name" value="ARF GTPase-activating protein GIT1 isoform 1"/>
    <property type="match status" value="1"/>
</dbReference>
<dbReference type="FunFam" id="1.10.220.150:FF:000003">
    <property type="entry name" value="ARF GTPase-activating protein GIT2 isoform 1"/>
    <property type="match status" value="1"/>
</dbReference>
<dbReference type="FunFam" id="1.20.120.330:FF:000002">
    <property type="entry name" value="ARF GTPase-activating protein GIT2 isoform 1"/>
    <property type="match status" value="1"/>
</dbReference>
<dbReference type="Gene3D" id="1.25.40.20">
    <property type="entry name" value="Ankyrin repeat-containing domain"/>
    <property type="match status" value="1"/>
</dbReference>
<dbReference type="Gene3D" id="1.10.220.150">
    <property type="entry name" value="Arf GTPase activating protein"/>
    <property type="match status" value="1"/>
</dbReference>
<dbReference type="Gene3D" id="1.20.120.330">
    <property type="entry name" value="Nucleotidyltransferases domain 2"/>
    <property type="match status" value="1"/>
</dbReference>
<dbReference type="InterPro" id="IPR002110">
    <property type="entry name" value="Ankyrin_rpt"/>
</dbReference>
<dbReference type="InterPro" id="IPR036770">
    <property type="entry name" value="Ankyrin_rpt-contain_sf"/>
</dbReference>
<dbReference type="InterPro" id="IPR037278">
    <property type="entry name" value="ARFGAP/RecO"/>
</dbReference>
<dbReference type="InterPro" id="IPR001164">
    <property type="entry name" value="ArfGAP_dom"/>
</dbReference>
<dbReference type="InterPro" id="IPR038508">
    <property type="entry name" value="ArfGAP_dom_sf"/>
</dbReference>
<dbReference type="InterPro" id="IPR047161">
    <property type="entry name" value="GIT-like"/>
</dbReference>
<dbReference type="InterPro" id="IPR022018">
    <property type="entry name" value="GIT1_C"/>
</dbReference>
<dbReference type="InterPro" id="IPR013724">
    <property type="entry name" value="GIT_SHD"/>
</dbReference>
<dbReference type="PANTHER" id="PTHR46097:SF4">
    <property type="entry name" value="ARF GTPASE-ACTIVATING PROTEIN GIT2"/>
    <property type="match status" value="1"/>
</dbReference>
<dbReference type="PANTHER" id="PTHR46097">
    <property type="entry name" value="G PROTEIN-COUPLED RECEPTOR KINASE INTERACTING ARFGAP"/>
    <property type="match status" value="1"/>
</dbReference>
<dbReference type="Pfam" id="PF12796">
    <property type="entry name" value="Ank_2"/>
    <property type="match status" value="1"/>
</dbReference>
<dbReference type="Pfam" id="PF01412">
    <property type="entry name" value="ArfGap"/>
    <property type="match status" value="1"/>
</dbReference>
<dbReference type="Pfam" id="PF12205">
    <property type="entry name" value="GIT1_C"/>
    <property type="match status" value="1"/>
</dbReference>
<dbReference type="Pfam" id="PF08518">
    <property type="entry name" value="GIT_SHD"/>
    <property type="match status" value="2"/>
</dbReference>
<dbReference type="PRINTS" id="PR00405">
    <property type="entry name" value="REVINTRACTNG"/>
</dbReference>
<dbReference type="SMART" id="SM00248">
    <property type="entry name" value="ANK"/>
    <property type="match status" value="3"/>
</dbReference>
<dbReference type="SMART" id="SM00105">
    <property type="entry name" value="ArfGap"/>
    <property type="match status" value="1"/>
</dbReference>
<dbReference type="SMART" id="SM00555">
    <property type="entry name" value="GIT"/>
    <property type="match status" value="2"/>
</dbReference>
<dbReference type="SUPFAM" id="SSF48403">
    <property type="entry name" value="Ankyrin repeat"/>
    <property type="match status" value="1"/>
</dbReference>
<dbReference type="SUPFAM" id="SSF57863">
    <property type="entry name" value="ArfGap/RecO-like zinc finger"/>
    <property type="match status" value="1"/>
</dbReference>
<dbReference type="PROSITE" id="PS50297">
    <property type="entry name" value="ANK_REP_REGION"/>
    <property type="match status" value="1"/>
</dbReference>
<dbReference type="PROSITE" id="PS50088">
    <property type="entry name" value="ANK_REPEAT"/>
    <property type="match status" value="1"/>
</dbReference>
<dbReference type="PROSITE" id="PS50115">
    <property type="entry name" value="ARFGAP"/>
    <property type="match status" value="1"/>
</dbReference>